<sequence length="149" mass="15658">MRAVVQRVDGASVSVAGATDDPSAPGVVGEIVGEGLCVLVGVTHDDTPQKAAQLARKLWSVRVLEGEKSCSDVNAPLLVISQFTLYGDARKGRRPTWNAAAPGEVAEPLVDEVVAQLRALGARVETGRFGADMRVSLTNHGPFTVIIEV</sequence>
<evidence type="ECO:0000255" key="1">
    <source>
        <dbReference type="HAMAP-Rule" id="MF_00518"/>
    </source>
</evidence>
<accession>Q54235</accession>
<protein>
    <recommendedName>
        <fullName evidence="1">D-aminoacyl-tRNA deacylase</fullName>
        <shortName evidence="1">DTD</shortName>
        <ecNumber evidence="1">3.1.1.96</ecNumber>
    </recommendedName>
    <alternativeName>
        <fullName evidence="1">Gly-tRNA(Ala) deacylase</fullName>
    </alternativeName>
</protein>
<comment type="function">
    <text evidence="1">An aminoacyl-tRNA editing enzyme that deacylates mischarged D-aminoacyl-tRNAs. Also deacylates mischarged glycyl-tRNA(Ala), protecting cells against glycine mischarging by AlaRS. Acts via tRNA-based rather than protein-based catalysis; rejects L-amino acids rather than detecting D-amino acids in the active site. By recycling D-aminoacyl-tRNA to D-amino acids and free tRNA molecules, this enzyme counteracts the toxicity associated with the formation of D-aminoacyl-tRNA entities in vivo and helps enforce protein L-homochirality.</text>
</comment>
<comment type="catalytic activity">
    <reaction evidence="1">
        <text>glycyl-tRNA(Ala) + H2O = tRNA(Ala) + glycine + H(+)</text>
        <dbReference type="Rhea" id="RHEA:53744"/>
        <dbReference type="Rhea" id="RHEA-COMP:9657"/>
        <dbReference type="Rhea" id="RHEA-COMP:13640"/>
        <dbReference type="ChEBI" id="CHEBI:15377"/>
        <dbReference type="ChEBI" id="CHEBI:15378"/>
        <dbReference type="ChEBI" id="CHEBI:57305"/>
        <dbReference type="ChEBI" id="CHEBI:78442"/>
        <dbReference type="ChEBI" id="CHEBI:78522"/>
        <dbReference type="EC" id="3.1.1.96"/>
    </reaction>
</comment>
<comment type="catalytic activity">
    <reaction evidence="1">
        <text>a D-aminoacyl-tRNA + H2O = a tRNA + a D-alpha-amino acid + H(+)</text>
        <dbReference type="Rhea" id="RHEA:13953"/>
        <dbReference type="Rhea" id="RHEA-COMP:10123"/>
        <dbReference type="Rhea" id="RHEA-COMP:10124"/>
        <dbReference type="ChEBI" id="CHEBI:15377"/>
        <dbReference type="ChEBI" id="CHEBI:15378"/>
        <dbReference type="ChEBI" id="CHEBI:59871"/>
        <dbReference type="ChEBI" id="CHEBI:78442"/>
        <dbReference type="ChEBI" id="CHEBI:79333"/>
        <dbReference type="EC" id="3.1.1.96"/>
    </reaction>
</comment>
<comment type="subunit">
    <text evidence="1">Homodimer.</text>
</comment>
<comment type="subcellular location">
    <subcellularLocation>
        <location evidence="1">Cytoplasm</location>
    </subcellularLocation>
</comment>
<comment type="domain">
    <text evidence="1">A Gly-cisPro motif from one monomer fits into the active site of the other monomer to allow specific chiral rejection of L-amino acids.</text>
</comment>
<comment type="similarity">
    <text evidence="1">Belongs to the DTD family.</text>
</comment>
<feature type="chain" id="PRO_0000164599" description="D-aminoacyl-tRNA deacylase">
    <location>
        <begin position="1"/>
        <end position="149"/>
    </location>
</feature>
<feature type="short sequence motif" description="Gly-cisPro motif, important for rejection of L-amino acids" evidence="1">
    <location>
        <begin position="141"/>
        <end position="142"/>
    </location>
</feature>
<keyword id="KW-0963">Cytoplasm</keyword>
<keyword id="KW-0378">Hydrolase</keyword>
<keyword id="KW-0694">RNA-binding</keyword>
<keyword id="KW-0820">tRNA-binding</keyword>
<dbReference type="EC" id="3.1.1.96" evidence="1"/>
<dbReference type="EMBL" id="D63706">
    <property type="protein sequence ID" value="BAA09834.1"/>
    <property type="molecule type" value="Genomic_DNA"/>
</dbReference>
<dbReference type="RefSeq" id="WP_012380277.1">
    <property type="nucleotide sequence ID" value="NZ_UAVD01000012.1"/>
</dbReference>
<dbReference type="SMR" id="Q54235"/>
<dbReference type="STRING" id="1911.GCA_001715295_02602"/>
<dbReference type="PATRIC" id="fig|455632.4.peg.4045"/>
<dbReference type="OMA" id="VFGADMK"/>
<dbReference type="OrthoDB" id="9801395at2"/>
<dbReference type="GO" id="GO:0005737">
    <property type="term" value="C:cytoplasm"/>
    <property type="evidence" value="ECO:0007669"/>
    <property type="project" value="UniProtKB-SubCell"/>
</dbReference>
<dbReference type="GO" id="GO:0051500">
    <property type="term" value="F:D-tyrosyl-tRNA(Tyr) deacylase activity"/>
    <property type="evidence" value="ECO:0007669"/>
    <property type="project" value="TreeGrafter"/>
</dbReference>
<dbReference type="GO" id="GO:0106026">
    <property type="term" value="F:Gly-tRNA(Ala) deacylase activity"/>
    <property type="evidence" value="ECO:0007669"/>
    <property type="project" value="UniProtKB-UniRule"/>
</dbReference>
<dbReference type="GO" id="GO:0043908">
    <property type="term" value="F:Ser(Gly)-tRNA(Ala) hydrolase activity"/>
    <property type="evidence" value="ECO:0007669"/>
    <property type="project" value="UniProtKB-UniRule"/>
</dbReference>
<dbReference type="GO" id="GO:0000049">
    <property type="term" value="F:tRNA binding"/>
    <property type="evidence" value="ECO:0007669"/>
    <property type="project" value="UniProtKB-UniRule"/>
</dbReference>
<dbReference type="GO" id="GO:0019478">
    <property type="term" value="P:D-amino acid catabolic process"/>
    <property type="evidence" value="ECO:0007669"/>
    <property type="project" value="UniProtKB-UniRule"/>
</dbReference>
<dbReference type="CDD" id="cd00563">
    <property type="entry name" value="Dtyr_deacylase"/>
    <property type="match status" value="1"/>
</dbReference>
<dbReference type="FunFam" id="3.50.80.10:FF:000002">
    <property type="entry name" value="D-aminoacyl-tRNA deacylase"/>
    <property type="match status" value="1"/>
</dbReference>
<dbReference type="Gene3D" id="3.50.80.10">
    <property type="entry name" value="D-tyrosyl-tRNA(Tyr) deacylase"/>
    <property type="match status" value="1"/>
</dbReference>
<dbReference type="HAMAP" id="MF_00518">
    <property type="entry name" value="Deacylase_Dtd"/>
    <property type="match status" value="1"/>
</dbReference>
<dbReference type="InterPro" id="IPR003732">
    <property type="entry name" value="Daa-tRNA_deacyls_DTD"/>
</dbReference>
<dbReference type="InterPro" id="IPR023509">
    <property type="entry name" value="DTD-like_sf"/>
</dbReference>
<dbReference type="NCBIfam" id="TIGR00256">
    <property type="entry name" value="D-aminoacyl-tRNA deacylase"/>
    <property type="match status" value="1"/>
</dbReference>
<dbReference type="PANTHER" id="PTHR10472:SF5">
    <property type="entry name" value="D-AMINOACYL-TRNA DEACYLASE 1"/>
    <property type="match status" value="1"/>
</dbReference>
<dbReference type="PANTHER" id="PTHR10472">
    <property type="entry name" value="D-TYROSYL-TRNA TYR DEACYLASE"/>
    <property type="match status" value="1"/>
</dbReference>
<dbReference type="Pfam" id="PF02580">
    <property type="entry name" value="Tyr_Deacylase"/>
    <property type="match status" value="1"/>
</dbReference>
<dbReference type="SUPFAM" id="SSF69500">
    <property type="entry name" value="DTD-like"/>
    <property type="match status" value="1"/>
</dbReference>
<gene>
    <name evidence="1" type="primary">dtd</name>
</gene>
<reference key="1">
    <citation type="journal article" date="1995" name="J. Bacteriol.">
        <title>Cloning and characterization of a gene involved in aerial mycelium formation in Streptomyces griseus.</title>
        <authorList>
            <person name="Kudo N."/>
            <person name="Kimura M."/>
            <person name="Beppu T."/>
            <person name="Horinouchi S."/>
        </authorList>
    </citation>
    <scope>NUCLEOTIDE SEQUENCE [GENOMIC DNA]</scope>
    <source>
        <strain>IFO 13350 / CBS 651.72</strain>
    </source>
</reference>
<proteinExistence type="inferred from homology"/>
<name>DTD_STRGR</name>
<organism>
    <name type="scientific">Streptomyces griseus</name>
    <dbReference type="NCBI Taxonomy" id="1911"/>
    <lineage>
        <taxon>Bacteria</taxon>
        <taxon>Bacillati</taxon>
        <taxon>Actinomycetota</taxon>
        <taxon>Actinomycetes</taxon>
        <taxon>Kitasatosporales</taxon>
        <taxon>Streptomycetaceae</taxon>
        <taxon>Streptomyces</taxon>
    </lineage>
</organism>